<gene>
    <name type="ordered locus">Noca_0093</name>
</gene>
<keyword id="KW-0456">Lyase</keyword>
<keyword id="KW-1185">Reference proteome</keyword>
<comment type="similarity">
    <text evidence="1">Belongs to the D-glutamate cyclase family.</text>
</comment>
<proteinExistence type="inferred from homology"/>
<accession>A1SCV3</accession>
<evidence type="ECO:0000255" key="1">
    <source>
        <dbReference type="HAMAP-Rule" id="MF_01830"/>
    </source>
</evidence>
<feature type="chain" id="PRO_0000379848" description="Putative hydro-lyase Noca_0093">
    <location>
        <begin position="1"/>
        <end position="270"/>
    </location>
</feature>
<protein>
    <recommendedName>
        <fullName evidence="1">Putative hydro-lyase Noca_0093</fullName>
        <ecNumber evidence="1">4.2.1.-</ecNumber>
    </recommendedName>
</protein>
<dbReference type="EC" id="4.2.1.-" evidence="1"/>
<dbReference type="EMBL" id="CP000509">
    <property type="protein sequence ID" value="ABL79638.1"/>
    <property type="molecule type" value="Genomic_DNA"/>
</dbReference>
<dbReference type="RefSeq" id="WP_011753589.1">
    <property type="nucleotide sequence ID" value="NC_008699.1"/>
</dbReference>
<dbReference type="SMR" id="A1SCV3"/>
<dbReference type="STRING" id="196162.Noca_0093"/>
<dbReference type="KEGG" id="nca:Noca_0093"/>
<dbReference type="eggNOG" id="COG4336">
    <property type="taxonomic scope" value="Bacteria"/>
</dbReference>
<dbReference type="HOGENOM" id="CLU_059759_0_0_11"/>
<dbReference type="OrthoDB" id="149585at2"/>
<dbReference type="Proteomes" id="UP000000640">
    <property type="component" value="Chromosome"/>
</dbReference>
<dbReference type="GO" id="GO:0016829">
    <property type="term" value="F:lyase activity"/>
    <property type="evidence" value="ECO:0007669"/>
    <property type="project" value="UniProtKB-KW"/>
</dbReference>
<dbReference type="FunFam" id="3.30.2040.10:FF:000001">
    <property type="entry name" value="D-glutamate cyclase, mitochondrial"/>
    <property type="match status" value="1"/>
</dbReference>
<dbReference type="Gene3D" id="3.40.1640.10">
    <property type="entry name" value="PSTPO5379-like"/>
    <property type="match status" value="1"/>
</dbReference>
<dbReference type="Gene3D" id="3.30.2040.10">
    <property type="entry name" value="PSTPO5379-like domain"/>
    <property type="match status" value="1"/>
</dbReference>
<dbReference type="HAMAP" id="MF_01830">
    <property type="entry name" value="Hydro_lyase"/>
    <property type="match status" value="1"/>
</dbReference>
<dbReference type="InterPro" id="IPR009906">
    <property type="entry name" value="D-Glu_cyclase"/>
</dbReference>
<dbReference type="InterPro" id="IPR038021">
    <property type="entry name" value="Putative_hydro-lyase"/>
</dbReference>
<dbReference type="InterPro" id="IPR016938">
    <property type="entry name" value="UPF0317"/>
</dbReference>
<dbReference type="NCBIfam" id="NF003969">
    <property type="entry name" value="PRK05463.1"/>
    <property type="match status" value="1"/>
</dbReference>
<dbReference type="PANTHER" id="PTHR32022">
    <property type="entry name" value="D-GLUTAMATE CYCLASE, MITOCHONDRIAL"/>
    <property type="match status" value="1"/>
</dbReference>
<dbReference type="PANTHER" id="PTHR32022:SF10">
    <property type="entry name" value="D-GLUTAMATE CYCLASE, MITOCHONDRIAL"/>
    <property type="match status" value="1"/>
</dbReference>
<dbReference type="Pfam" id="PF07286">
    <property type="entry name" value="D-Glu_cyclase"/>
    <property type="match status" value="1"/>
</dbReference>
<dbReference type="PIRSF" id="PIRSF029755">
    <property type="entry name" value="UCP029755"/>
    <property type="match status" value="1"/>
</dbReference>
<dbReference type="SUPFAM" id="SSF160920">
    <property type="entry name" value="PSTPO5379-like"/>
    <property type="match status" value="1"/>
</dbReference>
<reference key="1">
    <citation type="submission" date="2006-12" db="EMBL/GenBank/DDBJ databases">
        <title>Complete sequence of chromosome 1 of Nocardioides sp. JS614.</title>
        <authorList>
            <person name="Copeland A."/>
            <person name="Lucas S."/>
            <person name="Lapidus A."/>
            <person name="Barry K."/>
            <person name="Detter J.C."/>
            <person name="Glavina del Rio T."/>
            <person name="Hammon N."/>
            <person name="Israni S."/>
            <person name="Dalin E."/>
            <person name="Tice H."/>
            <person name="Pitluck S."/>
            <person name="Thompson L.S."/>
            <person name="Brettin T."/>
            <person name="Bruce D."/>
            <person name="Han C."/>
            <person name="Tapia R."/>
            <person name="Schmutz J."/>
            <person name="Larimer F."/>
            <person name="Land M."/>
            <person name="Hauser L."/>
            <person name="Kyrpides N."/>
            <person name="Kim E."/>
            <person name="Mattes T."/>
            <person name="Gossett J."/>
            <person name="Richardson P."/>
        </authorList>
    </citation>
    <scope>NUCLEOTIDE SEQUENCE [LARGE SCALE GENOMIC DNA]</scope>
    <source>
        <strain>ATCC BAA-499 / JS614</strain>
    </source>
</reference>
<name>Y093_NOCSJ</name>
<organism>
    <name type="scientific">Nocardioides sp. (strain ATCC BAA-499 / JS614)</name>
    <dbReference type="NCBI Taxonomy" id="196162"/>
    <lineage>
        <taxon>Bacteria</taxon>
        <taxon>Bacillati</taxon>
        <taxon>Actinomycetota</taxon>
        <taxon>Actinomycetes</taxon>
        <taxon>Propionibacteriales</taxon>
        <taxon>Nocardioidaceae</taxon>
        <taxon>Nocardioides</taxon>
    </lineage>
</organism>
<sequence>MNSAVPGTTHDDIAALTPARARERFRAGERVATSGWCPGFTQANLIAVPQQYAYDVLLFTQRNPKACPVIDVTDAGSVEPGIAPGADLRTDLPGYRVYEEGRLVAETGDAREHWREDMVAFLIGCSFTFERALLESGVPVRHLTAGTNVPMYRTNRACRPAGRLHGPMVVSMRAVPADQVAAAVQVTSRFPSMHGAPVHVGDPAALGIEDLAWPDYGDAPVLADGDVPVFWACGVTPQAVIAAVGIPYAVSHAPGQMFISDVPEATWALA</sequence>